<accession>B6J0J6</accession>
<reference key="1">
    <citation type="journal article" date="2009" name="Infect. Immun.">
        <title>Comparative genomics reveal extensive transposon-mediated genomic plasticity and diversity among potential effector proteins within the genus Coxiella.</title>
        <authorList>
            <person name="Beare P.A."/>
            <person name="Unsworth N."/>
            <person name="Andoh M."/>
            <person name="Voth D.E."/>
            <person name="Omsland A."/>
            <person name="Gilk S.D."/>
            <person name="Williams K.P."/>
            <person name="Sobral B.W."/>
            <person name="Kupko J.J. III"/>
            <person name="Porcella S.F."/>
            <person name="Samuel J.E."/>
            <person name="Heinzen R.A."/>
        </authorList>
    </citation>
    <scope>NUCLEOTIDE SEQUENCE [LARGE SCALE GENOMIC DNA]</scope>
    <source>
        <strain>CbuG_Q212</strain>
    </source>
</reference>
<comment type="function">
    <text evidence="1">Binds together with bS18 to 16S ribosomal RNA.</text>
</comment>
<comment type="similarity">
    <text evidence="1">Belongs to the bacterial ribosomal protein bS6 family.</text>
</comment>
<sequence length="127" mass="14578">MRHYEIVILVHPDQSSQVPAMVERYQSMIKEKDGKVHRLEDWGRRQLAYSIDKVHKAHYLLMNIESDQGVISELENAFRYNDAVIRSLILKRDHAITKSSLIMQGAEKGKSSRKEKVAAEAEASEEA</sequence>
<dbReference type="EMBL" id="CP001019">
    <property type="protein sequence ID" value="ACJ18474.1"/>
    <property type="molecule type" value="Genomic_DNA"/>
</dbReference>
<dbReference type="RefSeq" id="WP_010957857.1">
    <property type="nucleotide sequence ID" value="NC_011527.1"/>
</dbReference>
<dbReference type="SMR" id="B6J0J6"/>
<dbReference type="KEGG" id="cbg:CbuG_1138"/>
<dbReference type="HOGENOM" id="CLU_113441_6_1_6"/>
<dbReference type="GO" id="GO:0022627">
    <property type="term" value="C:cytosolic small ribosomal subunit"/>
    <property type="evidence" value="ECO:0007669"/>
    <property type="project" value="TreeGrafter"/>
</dbReference>
<dbReference type="GO" id="GO:0070181">
    <property type="term" value="F:small ribosomal subunit rRNA binding"/>
    <property type="evidence" value="ECO:0007669"/>
    <property type="project" value="TreeGrafter"/>
</dbReference>
<dbReference type="GO" id="GO:0003735">
    <property type="term" value="F:structural constituent of ribosome"/>
    <property type="evidence" value="ECO:0007669"/>
    <property type="project" value="InterPro"/>
</dbReference>
<dbReference type="GO" id="GO:0006412">
    <property type="term" value="P:translation"/>
    <property type="evidence" value="ECO:0007669"/>
    <property type="project" value="UniProtKB-UniRule"/>
</dbReference>
<dbReference type="CDD" id="cd00473">
    <property type="entry name" value="bS6"/>
    <property type="match status" value="1"/>
</dbReference>
<dbReference type="FunFam" id="3.30.70.60:FF:000003">
    <property type="entry name" value="30S ribosomal protein S6"/>
    <property type="match status" value="1"/>
</dbReference>
<dbReference type="Gene3D" id="3.30.70.60">
    <property type="match status" value="1"/>
</dbReference>
<dbReference type="HAMAP" id="MF_00360">
    <property type="entry name" value="Ribosomal_bS6"/>
    <property type="match status" value="1"/>
</dbReference>
<dbReference type="InterPro" id="IPR000529">
    <property type="entry name" value="Ribosomal_bS6"/>
</dbReference>
<dbReference type="InterPro" id="IPR035980">
    <property type="entry name" value="Ribosomal_bS6_sf"/>
</dbReference>
<dbReference type="InterPro" id="IPR020814">
    <property type="entry name" value="Ribosomal_S6_plastid/chlpt"/>
</dbReference>
<dbReference type="InterPro" id="IPR014717">
    <property type="entry name" value="Transl_elong_EF1B/ribsomal_bS6"/>
</dbReference>
<dbReference type="NCBIfam" id="TIGR00166">
    <property type="entry name" value="S6"/>
    <property type="match status" value="1"/>
</dbReference>
<dbReference type="PANTHER" id="PTHR21011">
    <property type="entry name" value="MITOCHONDRIAL 28S RIBOSOMAL PROTEIN S6"/>
    <property type="match status" value="1"/>
</dbReference>
<dbReference type="PANTHER" id="PTHR21011:SF1">
    <property type="entry name" value="SMALL RIBOSOMAL SUBUNIT PROTEIN BS6M"/>
    <property type="match status" value="1"/>
</dbReference>
<dbReference type="Pfam" id="PF01250">
    <property type="entry name" value="Ribosomal_S6"/>
    <property type="match status" value="1"/>
</dbReference>
<dbReference type="SUPFAM" id="SSF54995">
    <property type="entry name" value="Ribosomal protein S6"/>
    <property type="match status" value="1"/>
</dbReference>
<keyword id="KW-0687">Ribonucleoprotein</keyword>
<keyword id="KW-0689">Ribosomal protein</keyword>
<keyword id="KW-0694">RNA-binding</keyword>
<keyword id="KW-0699">rRNA-binding</keyword>
<feature type="chain" id="PRO_1000120732" description="Small ribosomal subunit protein bS6">
    <location>
        <begin position="1"/>
        <end position="127"/>
    </location>
</feature>
<feature type="region of interest" description="Disordered" evidence="2">
    <location>
        <begin position="104"/>
        <end position="127"/>
    </location>
</feature>
<feature type="compositionally biased region" description="Basic and acidic residues" evidence="2">
    <location>
        <begin position="107"/>
        <end position="119"/>
    </location>
</feature>
<evidence type="ECO:0000255" key="1">
    <source>
        <dbReference type="HAMAP-Rule" id="MF_00360"/>
    </source>
</evidence>
<evidence type="ECO:0000256" key="2">
    <source>
        <dbReference type="SAM" id="MobiDB-lite"/>
    </source>
</evidence>
<evidence type="ECO:0000305" key="3"/>
<name>RS6_COXB2</name>
<proteinExistence type="inferred from homology"/>
<protein>
    <recommendedName>
        <fullName evidence="1">Small ribosomal subunit protein bS6</fullName>
    </recommendedName>
    <alternativeName>
        <fullName evidence="3">30S ribosomal protein S6</fullName>
    </alternativeName>
</protein>
<gene>
    <name evidence="1" type="primary">rpsF</name>
    <name type="ordered locus">CbuG_1138</name>
</gene>
<organism>
    <name type="scientific">Coxiella burnetii (strain CbuG_Q212)</name>
    <name type="common">Coxiella burnetii (strain Q212)</name>
    <dbReference type="NCBI Taxonomy" id="434923"/>
    <lineage>
        <taxon>Bacteria</taxon>
        <taxon>Pseudomonadati</taxon>
        <taxon>Pseudomonadota</taxon>
        <taxon>Gammaproteobacteria</taxon>
        <taxon>Legionellales</taxon>
        <taxon>Coxiellaceae</taxon>
        <taxon>Coxiella</taxon>
    </lineage>
</organism>